<protein>
    <recommendedName>
        <fullName evidence="8">4-O-methyl-glucuronoyl methylesterase 1</fullName>
        <ecNumber evidence="6 7">3.1.1.117</ecNumber>
    </recommendedName>
    <alternativeName>
        <fullName>Glucuronoyl esterase 1</fullName>
        <shortName>GE1</shortName>
    </alternativeName>
</protein>
<evidence type="ECO:0000250" key="1">
    <source>
        <dbReference type="UniProtKB" id="G2QJR6"/>
    </source>
</evidence>
<evidence type="ECO:0000250" key="2">
    <source>
        <dbReference type="UniProtKB" id="P0CT87"/>
    </source>
</evidence>
<evidence type="ECO:0000255" key="3"/>
<evidence type="ECO:0000255" key="4">
    <source>
        <dbReference type="PROSITE-ProRule" id="PRU00597"/>
    </source>
</evidence>
<evidence type="ECO:0000256" key="5">
    <source>
        <dbReference type="SAM" id="MobiDB-lite"/>
    </source>
</evidence>
<evidence type="ECO:0000269" key="6">
    <source>
    </source>
</evidence>
<evidence type="ECO:0000269" key="7">
    <source>
    </source>
</evidence>
<evidence type="ECO:0000305" key="8"/>
<evidence type="ECO:0000305" key="9">
    <source>
    </source>
</evidence>
<evidence type="ECO:0000305" key="10">
    <source>
    </source>
</evidence>
<comment type="function">
    <text evidence="6 7">Glucuronoyl esterase which may play a significant role in biomass degradation, as it is considered to disconnect hemicellulose from lignin through the hydrolysis of the ester bond between 4-O-methyl-D-glucuronic acid residues of glucuronoxylans and aromatic alcohols of lignin (PubMed:27397104). Cleaves native lignin-carbohydrate (LC) ester bonds from LC complex preparations of spruce (softwood) and birch (hardwood), containing mainly hemicelluloses with partially acetylated glucomannans in spruce and partially acetylated xylan in birch (PubMed:27397104). Can hydrolyze benzyl glucuronic acid (BnGlcA), allyl glucuronic acid (allylGlcA) and to a lower degree methyl glucuronic acid (MeGlcA) in vitro (PubMed:28429057).</text>
</comment>
<comment type="catalytic activity">
    <reaction evidence="6 7">
        <text>a 4-O-methyl-alpha-D-glucuronosyl ester derivative + H2O = 4-O-methyl-alpha-D-glucuronate derivative + an alcohol + H(+)</text>
        <dbReference type="Rhea" id="RHEA:67452"/>
        <dbReference type="ChEBI" id="CHEBI:15377"/>
        <dbReference type="ChEBI" id="CHEBI:15378"/>
        <dbReference type="ChEBI" id="CHEBI:30879"/>
        <dbReference type="ChEBI" id="CHEBI:171667"/>
        <dbReference type="ChEBI" id="CHEBI:171668"/>
        <dbReference type="EC" id="3.1.1.117"/>
    </reaction>
    <physiologicalReaction direction="left-to-right" evidence="9 10">
        <dbReference type="Rhea" id="RHEA:67453"/>
    </physiologicalReaction>
</comment>
<comment type="biophysicochemical properties">
    <kinetics>
        <KM evidence="7">1.7 mM for benzyl glucuronic acid</KM>
        <Vmax evidence="7">0.9 umol/min/mg enzyme for benzyl glucuronic acid</Vmax>
    </kinetics>
</comment>
<comment type="subcellular location">
    <subcellularLocation>
        <location evidence="2">Secreted</location>
    </subcellularLocation>
</comment>
<comment type="similarity">
    <text evidence="8">Belongs to the carbohydrate esterase 15 (CE15) family.</text>
</comment>
<keyword id="KW-1015">Disulfide bond</keyword>
<keyword id="KW-0378">Hydrolase</keyword>
<keyword id="KW-0439">Lignin degradation</keyword>
<keyword id="KW-0964">Secreted</keyword>
<keyword id="KW-0719">Serine esterase</keyword>
<keyword id="KW-0732">Signal</keyword>
<sequence length="496" mass="51568">MKSTVASALLVLAGTAVQAQSGPWQQCGGIGWQGPFTCVSGHTCQVLNDWYHQCVPGGGPSPPPTSPPPTTPPPTSPPPTSPPPTSPPPTSPPPTSPPPTSPPPTSPPPTSPPPTSPPPTSPPPSSGSCPSTPGGLGSGNQRLPDPFTFHNGNTVTSAADFQCRQREVSSLIQQYELGQFPAPPQSVTSSYSGNTLSITVSDQGRSISFSVSISGGSGSKSPAIIAYGAPSIPVPNGVATIRFNNDDIAAQQSGSSRGQGKFYNLYGSGHSAGAMTAWAWGVARIIDALEKTPAAGIDPTRVGVTGCSRNGKGAMVAGALEPRIALTIPQESGSGGSACWRISNWQGQQGQNVQTPAQIITENVWLGPVFNNHANNVNALPFDHHQLAGLIAPRALYVIENSDMEWLGWTATYGCMAAARTQWEALGALDNFGFSQVGGNQHCSFNSGKQSAELNAFINKFLLQSGGGTTSILRTERNHGSFNLAEWTPWNVPNLR</sequence>
<organism>
    <name type="scientific">Sodiomyces alcalophilus</name>
    <name type="common">Acremonium alcalophilum</name>
    <dbReference type="NCBI Taxonomy" id="398408"/>
    <lineage>
        <taxon>Eukaryota</taxon>
        <taxon>Fungi</taxon>
        <taxon>Dikarya</taxon>
        <taxon>Ascomycota</taxon>
        <taxon>Pezizomycotina</taxon>
        <taxon>Sordariomycetes</taxon>
        <taxon>Hypocreomycetidae</taxon>
        <taxon>Glomerellales</taxon>
        <taxon>Plectosphaerellaceae</taxon>
        <taxon>Sodiomyces</taxon>
    </lineage>
</organism>
<dbReference type="EC" id="3.1.1.117" evidence="6 7"/>
<dbReference type="EMBL" id="KX898021">
    <property type="protein sequence ID" value="AOT21131.1"/>
    <property type="molecule type" value="Genomic_DNA"/>
</dbReference>
<dbReference type="SMR" id="A0A1D8EJG8"/>
<dbReference type="ESTHER" id="acram-a0a1d8ejg8">
    <property type="family name" value="Glucuronoyl_esterase"/>
</dbReference>
<dbReference type="BRENDA" id="3.1.1.117">
    <property type="organism ID" value="16450"/>
</dbReference>
<dbReference type="SABIO-RK" id="A0A1D8EJG8"/>
<dbReference type="GO" id="GO:0005576">
    <property type="term" value="C:extracellular region"/>
    <property type="evidence" value="ECO:0007669"/>
    <property type="project" value="UniProtKB-SubCell"/>
</dbReference>
<dbReference type="GO" id="GO:0052689">
    <property type="term" value="F:carboxylic ester hydrolase activity"/>
    <property type="evidence" value="ECO:0007669"/>
    <property type="project" value="UniProtKB-KW"/>
</dbReference>
<dbReference type="GO" id="GO:0030248">
    <property type="term" value="F:cellulose binding"/>
    <property type="evidence" value="ECO:0007669"/>
    <property type="project" value="InterPro"/>
</dbReference>
<dbReference type="GO" id="GO:0005975">
    <property type="term" value="P:carbohydrate metabolic process"/>
    <property type="evidence" value="ECO:0007669"/>
    <property type="project" value="InterPro"/>
</dbReference>
<dbReference type="GO" id="GO:0046274">
    <property type="term" value="P:lignin catabolic process"/>
    <property type="evidence" value="ECO:0007669"/>
    <property type="project" value="UniProtKB-KW"/>
</dbReference>
<dbReference type="Gene3D" id="3.40.50.1820">
    <property type="entry name" value="alpha/beta hydrolase"/>
    <property type="match status" value="1"/>
</dbReference>
<dbReference type="InterPro" id="IPR029058">
    <property type="entry name" value="AB_hydrolase_fold"/>
</dbReference>
<dbReference type="InterPro" id="IPR035971">
    <property type="entry name" value="CBD_sf"/>
</dbReference>
<dbReference type="InterPro" id="IPR000254">
    <property type="entry name" value="Cellulose-bd_dom_fun"/>
</dbReference>
<dbReference type="InterPro" id="IPR054579">
    <property type="entry name" value="GCE-like_dom"/>
</dbReference>
<dbReference type="Pfam" id="PF00734">
    <property type="entry name" value="CBM_1"/>
    <property type="match status" value="1"/>
</dbReference>
<dbReference type="Pfam" id="PF22244">
    <property type="entry name" value="GCE_fung"/>
    <property type="match status" value="1"/>
</dbReference>
<dbReference type="PRINTS" id="PR01217">
    <property type="entry name" value="PRICHEXTENSN"/>
</dbReference>
<dbReference type="SMART" id="SM00236">
    <property type="entry name" value="fCBD"/>
    <property type="match status" value="1"/>
</dbReference>
<dbReference type="SUPFAM" id="SSF53474">
    <property type="entry name" value="alpha/beta-Hydrolases"/>
    <property type="match status" value="1"/>
</dbReference>
<dbReference type="SUPFAM" id="SSF57180">
    <property type="entry name" value="Cellulose-binding domain"/>
    <property type="match status" value="1"/>
</dbReference>
<dbReference type="PROSITE" id="PS00562">
    <property type="entry name" value="CBM1_1"/>
    <property type="match status" value="1"/>
</dbReference>
<dbReference type="PROSITE" id="PS51164">
    <property type="entry name" value="CBM1_2"/>
    <property type="match status" value="1"/>
</dbReference>
<accession>A0A1D8EJG8</accession>
<feature type="signal peptide" evidence="3">
    <location>
        <begin position="1"/>
        <end position="19"/>
    </location>
</feature>
<feature type="chain" id="PRO_5009106681" description="4-O-methyl-glucuronoyl methylesterase 1">
    <location>
        <begin position="20"/>
        <end position="496"/>
    </location>
</feature>
<feature type="domain" description="CBM1" evidence="4">
    <location>
        <begin position="20"/>
        <end position="55"/>
    </location>
</feature>
<feature type="region of interest" description="Disordered" evidence="5">
    <location>
        <begin position="57"/>
        <end position="151"/>
    </location>
</feature>
<feature type="short sequence motif" description="GXSYXG catalytic site motif" evidence="1">
    <location>
        <begin position="306"/>
        <end position="311"/>
    </location>
</feature>
<feature type="compositionally biased region" description="Pro residues" evidence="5">
    <location>
        <begin position="59"/>
        <end position="125"/>
    </location>
</feature>
<feature type="active site" description="Nucleophile" evidence="1">
    <location>
        <position position="308"/>
    </location>
</feature>
<feature type="active site" description="Proton donor/acceptor" evidence="1">
    <location>
        <position position="442"/>
    </location>
</feature>
<feature type="binding site" evidence="1">
    <location>
        <position position="312"/>
    </location>
    <ligand>
        <name>substrate</name>
    </ligand>
</feature>
<feature type="binding site" evidence="1">
    <location>
        <position position="354"/>
    </location>
    <ligand>
        <name>substrate</name>
    </ligand>
</feature>
<feature type="binding site" evidence="1">
    <location>
        <position position="362"/>
    </location>
    <ligand>
        <name>substrate</name>
    </ligand>
</feature>
<feature type="binding site" evidence="1">
    <location>
        <position position="406"/>
    </location>
    <ligand>
        <name>substrate</name>
    </ligand>
</feature>
<feature type="disulfide bond" evidence="1">
    <location>
        <begin position="129"/>
        <end position="163"/>
    </location>
</feature>
<feature type="disulfide bond" evidence="1">
    <location>
        <begin position="307"/>
        <end position="443"/>
    </location>
</feature>
<feature type="disulfide bond" evidence="1">
    <location>
        <begin position="339"/>
        <end position="415"/>
    </location>
</feature>
<name>GCE1_SODAL</name>
<proteinExistence type="evidence at protein level"/>
<reference key="1">
    <citation type="journal article" date="2016" name="FEBS Lett.">
        <title>A glucuronoyl esterase from Acremonium alcalophilum cleaves native lignin-carbohydrate ester bonds.</title>
        <authorList>
            <person name="Arnling Baath J."/>
            <person name="Giummarella N."/>
            <person name="Klaubauf S."/>
            <person name="Lawoko M."/>
            <person name="Olsson L."/>
        </authorList>
    </citation>
    <scope>NUCLEOTIDE SEQUENCE [GENOMIC DNA]</scope>
    <scope>FUNCTION</scope>
    <scope>CATALYTIC ACTIVITY</scope>
    <source>
        <strain>ATCC 90507 / BCRC 33522 / CBS 114.92 / JCM 7366 / KCTC 16719</strain>
    </source>
</reference>
<reference key="2">
    <citation type="journal article" date="2017" name="Appl. Microbiol. Biotechnol.">
        <title>Characterisation of three fungal glucuronoyl esterases on glucuronic acid ester model compounds.</title>
        <authorList>
            <person name="Huettner S."/>
            <person name="Klaubauf S."/>
            <person name="de Vries R.P."/>
            <person name="Olsson L."/>
        </authorList>
    </citation>
    <scope>FUNCTION</scope>
    <scope>CATALYTIC ACTIVITY</scope>
    <scope>BIOPHYSICOCHEMICAL PROPERTIES</scope>
</reference>